<accession>Q6PFS5</accession>
<keyword id="KW-0968">Cytoplasmic vesicle</keyword>
<keyword id="KW-0256">Endoplasmic reticulum</keyword>
<keyword id="KW-0931">ER-Golgi transport</keyword>
<keyword id="KW-0333">Golgi apparatus</keyword>
<keyword id="KW-0472">Membrane</keyword>
<keyword id="KW-0653">Protein transport</keyword>
<keyword id="KW-0675">Receptor</keyword>
<keyword id="KW-1185">Reference proteome</keyword>
<keyword id="KW-0812">Transmembrane</keyword>
<keyword id="KW-1133">Transmembrane helix</keyword>
<keyword id="KW-0813">Transport</keyword>
<evidence type="ECO:0000250" key="1">
    <source>
        <dbReference type="UniProtKB" id="O43731"/>
    </source>
</evidence>
<evidence type="ECO:0000250" key="2">
    <source>
        <dbReference type="UniProtKB" id="P24390"/>
    </source>
</evidence>
<evidence type="ECO:0000250" key="3">
    <source>
        <dbReference type="UniProtKB" id="P33947"/>
    </source>
</evidence>
<evidence type="ECO:0000250" key="4">
    <source>
        <dbReference type="UniProtKB" id="Q5ZKX9"/>
    </source>
</evidence>
<evidence type="ECO:0000305" key="5"/>
<dbReference type="EMBL" id="BC057436">
    <property type="protein sequence ID" value="AAH57436.1"/>
    <property type="molecule type" value="mRNA"/>
</dbReference>
<dbReference type="RefSeq" id="NP_956934.1">
    <property type="nucleotide sequence ID" value="NM_200640.1"/>
</dbReference>
<dbReference type="SMR" id="Q6PFS5"/>
<dbReference type="FunCoup" id="Q6PFS5">
    <property type="interactions" value="1615"/>
</dbReference>
<dbReference type="STRING" id="7955.ENSDARP00000059955"/>
<dbReference type="PaxDb" id="7955-ENSDARP00000059955"/>
<dbReference type="GeneID" id="393613"/>
<dbReference type="KEGG" id="dre:393613"/>
<dbReference type="AGR" id="ZFIN:ZDB-GENE-040426-1387"/>
<dbReference type="CTD" id="11015"/>
<dbReference type="ZFIN" id="ZDB-GENE-040426-1387">
    <property type="gene designation" value="kdelr3"/>
</dbReference>
<dbReference type="eggNOG" id="KOG3106">
    <property type="taxonomic scope" value="Eukaryota"/>
</dbReference>
<dbReference type="InParanoid" id="Q6PFS5"/>
<dbReference type="OrthoDB" id="7694678at2759"/>
<dbReference type="PhylomeDB" id="Q6PFS5"/>
<dbReference type="Reactome" id="R-DRE-6811434">
    <property type="pathway name" value="COPI-dependent Golgi-to-ER retrograde traffic"/>
</dbReference>
<dbReference type="PRO" id="PR:Q6PFS5"/>
<dbReference type="Proteomes" id="UP000000437">
    <property type="component" value="Chromosome 3"/>
</dbReference>
<dbReference type="GO" id="GO:0005801">
    <property type="term" value="C:cis-Golgi network"/>
    <property type="evidence" value="ECO:0000318"/>
    <property type="project" value="GO_Central"/>
</dbReference>
<dbReference type="GO" id="GO:0030663">
    <property type="term" value="C:COPI-coated vesicle membrane"/>
    <property type="evidence" value="ECO:0007669"/>
    <property type="project" value="UniProtKB-SubCell"/>
</dbReference>
<dbReference type="GO" id="GO:0005783">
    <property type="term" value="C:endoplasmic reticulum"/>
    <property type="evidence" value="ECO:0000318"/>
    <property type="project" value="GO_Central"/>
</dbReference>
<dbReference type="GO" id="GO:0005789">
    <property type="term" value="C:endoplasmic reticulum membrane"/>
    <property type="evidence" value="ECO:0000250"/>
    <property type="project" value="UniProtKB"/>
</dbReference>
<dbReference type="GO" id="GO:0000139">
    <property type="term" value="C:Golgi membrane"/>
    <property type="evidence" value="ECO:0000250"/>
    <property type="project" value="UniProtKB"/>
</dbReference>
<dbReference type="GO" id="GO:0046923">
    <property type="term" value="F:ER retention sequence binding"/>
    <property type="evidence" value="ECO:0000318"/>
    <property type="project" value="GO_Central"/>
</dbReference>
<dbReference type="GO" id="GO:0005046">
    <property type="term" value="F:KDEL sequence binding"/>
    <property type="evidence" value="ECO:0000250"/>
    <property type="project" value="UniProtKB"/>
</dbReference>
<dbReference type="GO" id="GO:0006621">
    <property type="term" value="P:protein retention in ER lumen"/>
    <property type="evidence" value="ECO:0000318"/>
    <property type="project" value="GO_Central"/>
</dbReference>
<dbReference type="GO" id="GO:0015031">
    <property type="term" value="P:protein transport"/>
    <property type="evidence" value="ECO:0007669"/>
    <property type="project" value="UniProtKB-KW"/>
</dbReference>
<dbReference type="GO" id="GO:0006890">
    <property type="term" value="P:retrograde vesicle-mediated transport, Golgi to endoplasmic reticulum"/>
    <property type="evidence" value="ECO:0000250"/>
    <property type="project" value="UniProtKB"/>
</dbReference>
<dbReference type="InterPro" id="IPR000133">
    <property type="entry name" value="ER_ret_rcpt"/>
</dbReference>
<dbReference type="PANTHER" id="PTHR10585">
    <property type="entry name" value="ER LUMEN PROTEIN RETAINING RECEPTOR"/>
    <property type="match status" value="1"/>
</dbReference>
<dbReference type="Pfam" id="PF00810">
    <property type="entry name" value="ER_lumen_recept"/>
    <property type="match status" value="1"/>
</dbReference>
<dbReference type="PRINTS" id="PR00660">
    <property type="entry name" value="ERLUMENR"/>
</dbReference>
<dbReference type="PROSITE" id="PS00951">
    <property type="entry name" value="ER_LUMEN_RECEPTOR_1"/>
    <property type="match status" value="1"/>
</dbReference>
<dbReference type="PROSITE" id="PS00952">
    <property type="entry name" value="ER_LUMEN_RECEPTOR_2"/>
    <property type="match status" value="1"/>
</dbReference>
<organism>
    <name type="scientific">Danio rerio</name>
    <name type="common">Zebrafish</name>
    <name type="synonym">Brachydanio rerio</name>
    <dbReference type="NCBI Taxonomy" id="7955"/>
    <lineage>
        <taxon>Eukaryota</taxon>
        <taxon>Metazoa</taxon>
        <taxon>Chordata</taxon>
        <taxon>Craniata</taxon>
        <taxon>Vertebrata</taxon>
        <taxon>Euteleostomi</taxon>
        <taxon>Actinopterygii</taxon>
        <taxon>Neopterygii</taxon>
        <taxon>Teleostei</taxon>
        <taxon>Ostariophysi</taxon>
        <taxon>Cypriniformes</taxon>
        <taxon>Danionidae</taxon>
        <taxon>Danioninae</taxon>
        <taxon>Danio</taxon>
    </lineage>
</organism>
<protein>
    <recommendedName>
        <fullName>ER lumen protein-retaining receptor 3</fullName>
    </recommendedName>
    <alternativeName>
        <fullName>KDEL endoplasmic reticulum protein retention receptor 3</fullName>
        <shortName>KDEL receptor 3</shortName>
    </alternativeName>
</protein>
<name>ERD23_DANRE</name>
<sequence>MNIFRLSGDVCHLIAIIILFLKIWRSKSCAGISGKSQVLFALVFTTRYLDLFTSYISAYNTVMKVVYLLLAYSTVGLIFFRFRNSYDSESDSFRVEFLLVPVAGLSFLENYAFTPLEILWTFSIYLESVAILPQLFMITKTGEAESITAHYLLFLGLYRALYLANWLWRFHTEGFYDQIAVVSGVVQTIFYCDFFYLYFTRVLRGSGKMSLPMPV</sequence>
<comment type="function">
    <text evidence="1">Receptor for the C-terminal sequence motif K-D-E-L that is present on endoplasmic reticulum resident proteins and that mediates their recycling from the Golgi back to the endoplasmic reticulum.</text>
</comment>
<comment type="subcellular location">
    <subcellularLocation>
        <location evidence="1">Endoplasmic reticulum membrane</location>
        <topology evidence="4">Multi-pass membrane protein</topology>
    </subcellularLocation>
    <subcellularLocation>
        <location evidence="1">Golgi apparatus membrane</location>
        <topology evidence="4">Multi-pass membrane protein</topology>
    </subcellularLocation>
    <subcellularLocation>
        <location evidence="1">Cytoplasmic vesicle</location>
        <location evidence="1">COPI-coated vesicle membrane</location>
        <topology evidence="4">Multi-pass membrane protein</topology>
    </subcellularLocation>
    <text evidence="1">Localized in the Golgi in the absence of bound proteins with the sequence motif K-D-E-L. Trafficks back to the endoplasmic reticulum together with cargo proteins containing the sequence motif K-D-E-L.</text>
</comment>
<comment type="domain">
    <text evidence="2 4">Binds the C-terminal sequence motif K-D-E-L in a hydrophilic cavity between the transmembrane domains. This triggers a conformation change that exposes a Lys-rich patch on the cytosolic surface of the protein (By similarity). This patch mediates recycling from the Golgi to the endoplasmic reticulum, probably via COPI vesicles (By similarity).</text>
</comment>
<comment type="similarity">
    <text evidence="5">Belongs to the ERD2 family.</text>
</comment>
<gene>
    <name type="primary">kdelr3</name>
    <name type="ORF">zgc:64171</name>
</gene>
<reference key="1">
    <citation type="submission" date="2003-09" db="EMBL/GenBank/DDBJ databases">
        <authorList>
            <consortium name="NIH - Zebrafish Gene Collection (ZGC) project"/>
        </authorList>
    </citation>
    <scope>NUCLEOTIDE SEQUENCE [LARGE SCALE MRNA]</scope>
    <source>
        <tissue>Kidney</tissue>
    </source>
</reference>
<proteinExistence type="evidence at transcript level"/>
<feature type="chain" id="PRO_0000252352" description="ER lumen protein-retaining receptor 3">
    <location>
        <begin position="1"/>
        <end position="215"/>
    </location>
</feature>
<feature type="topological domain" description="Lumenal" evidence="5">
    <location>
        <begin position="1"/>
        <end position="4"/>
    </location>
</feature>
<feature type="transmembrane region" description="Helical" evidence="4">
    <location>
        <begin position="5"/>
        <end position="24"/>
    </location>
</feature>
<feature type="topological domain" description="Cytoplasmic" evidence="5">
    <location>
        <begin position="25"/>
        <end position="32"/>
    </location>
</feature>
<feature type="transmembrane region" description="Helical" evidence="4">
    <location>
        <begin position="33"/>
        <end position="52"/>
    </location>
</feature>
<feature type="topological domain" description="Lumenal" evidence="5">
    <location>
        <begin position="53"/>
        <end position="58"/>
    </location>
</feature>
<feature type="transmembrane region" description="Helical" evidence="4">
    <location>
        <begin position="59"/>
        <end position="79"/>
    </location>
</feature>
<feature type="topological domain" description="Cytoplasmic" evidence="5">
    <location>
        <begin position="80"/>
        <end position="92"/>
    </location>
</feature>
<feature type="transmembrane region" description="Helical" evidence="4">
    <location>
        <begin position="93"/>
        <end position="110"/>
    </location>
</feature>
<feature type="topological domain" description="Lumenal" evidence="5">
    <location>
        <begin position="111"/>
        <end position="116"/>
    </location>
</feature>
<feature type="transmembrane region" description="Helical" evidence="4">
    <location>
        <begin position="117"/>
        <end position="135"/>
    </location>
</feature>
<feature type="topological domain" description="Cytoplasmic" evidence="5">
    <location>
        <begin position="136"/>
        <end position="149"/>
    </location>
</feature>
<feature type="transmembrane region" description="Helical" evidence="4">
    <location>
        <begin position="150"/>
        <end position="168"/>
    </location>
</feature>
<feature type="topological domain" description="Lumenal" evidence="5">
    <location>
        <begin position="169"/>
        <end position="178"/>
    </location>
</feature>
<feature type="transmembrane region" description="Helical" evidence="4">
    <location>
        <begin position="179"/>
        <end position="199"/>
    </location>
</feature>
<feature type="topological domain" description="Cytoplasmic" evidence="5">
    <location>
        <begin position="200"/>
        <end position="215"/>
    </location>
</feature>
<feature type="region of interest" description="Interaction with the K-D-E-L motif on target proteins" evidence="4">
    <location>
        <begin position="47"/>
        <end position="48"/>
    </location>
</feature>
<feature type="region of interest" description="Interaction with the K-D-E-L motif on target proteins" evidence="4">
    <location>
        <begin position="159"/>
        <end position="169"/>
    </location>
</feature>
<feature type="region of interest" description="Important for recycling of cargo proteins with the sequence motif K-D-E-L from the Golgi to the endoplasmic reticulum" evidence="3">
    <location>
        <begin position="204"/>
        <end position="208"/>
    </location>
</feature>
<feature type="site" description="Interaction with the K-D-E-L motif on target proteins" evidence="4">
    <location>
        <position position="5"/>
    </location>
</feature>
<feature type="site" description="Interaction with the K-D-E-L motif on target proteins" evidence="4">
    <location>
        <position position="54"/>
    </location>
</feature>
<feature type="site" description="Interaction with the K-D-E-L motif on target proteins" evidence="4">
    <location>
        <position position="117"/>
    </location>
</feature>
<feature type="site" description="Important for recycling of cargo proteins with the sequence motif K-D-E-L from the Golgi to the endoplasmic reticulum" evidence="2">
    <location>
        <position position="193"/>
    </location>
</feature>